<name>NADA_HALMA</name>
<dbReference type="EC" id="2.5.1.72" evidence="1"/>
<dbReference type="EMBL" id="AY596297">
    <property type="protein sequence ID" value="AAV48090.1"/>
    <property type="molecule type" value="Genomic_DNA"/>
</dbReference>
<dbReference type="RefSeq" id="WP_011224789.1">
    <property type="nucleotide sequence ID" value="NC_006396.1"/>
</dbReference>
<dbReference type="SMR" id="Q5UXB3"/>
<dbReference type="STRING" id="272569.rrnAC3410"/>
<dbReference type="PaxDb" id="272569-rrnAC3410"/>
<dbReference type="EnsemblBacteria" id="AAV48090">
    <property type="protein sequence ID" value="AAV48090"/>
    <property type="gene ID" value="rrnAC3410"/>
</dbReference>
<dbReference type="GeneID" id="40154195"/>
<dbReference type="KEGG" id="hma:rrnAC3410"/>
<dbReference type="PATRIC" id="fig|272569.17.peg.3927"/>
<dbReference type="eggNOG" id="arCOG04459">
    <property type="taxonomic scope" value="Archaea"/>
</dbReference>
<dbReference type="HOGENOM" id="CLU_047382_2_0_2"/>
<dbReference type="UniPathway" id="UPA00253">
    <property type="reaction ID" value="UER00327"/>
</dbReference>
<dbReference type="Proteomes" id="UP000001169">
    <property type="component" value="Chromosome I"/>
</dbReference>
<dbReference type="GO" id="GO:0005737">
    <property type="term" value="C:cytoplasm"/>
    <property type="evidence" value="ECO:0007669"/>
    <property type="project" value="UniProtKB-SubCell"/>
</dbReference>
<dbReference type="GO" id="GO:0051539">
    <property type="term" value="F:4 iron, 4 sulfur cluster binding"/>
    <property type="evidence" value="ECO:0007669"/>
    <property type="project" value="UniProtKB-KW"/>
</dbReference>
<dbReference type="GO" id="GO:0046872">
    <property type="term" value="F:metal ion binding"/>
    <property type="evidence" value="ECO:0007669"/>
    <property type="project" value="UniProtKB-KW"/>
</dbReference>
<dbReference type="GO" id="GO:0008987">
    <property type="term" value="F:quinolinate synthetase A activity"/>
    <property type="evidence" value="ECO:0007669"/>
    <property type="project" value="UniProtKB-UniRule"/>
</dbReference>
<dbReference type="GO" id="GO:0034628">
    <property type="term" value="P:'de novo' NAD biosynthetic process from L-aspartate"/>
    <property type="evidence" value="ECO:0007669"/>
    <property type="project" value="TreeGrafter"/>
</dbReference>
<dbReference type="FunFam" id="3.40.50.10800:FF:000001">
    <property type="entry name" value="Quinolinate synthase A"/>
    <property type="match status" value="1"/>
</dbReference>
<dbReference type="Gene3D" id="3.40.50.10800">
    <property type="entry name" value="NadA-like"/>
    <property type="match status" value="3"/>
</dbReference>
<dbReference type="HAMAP" id="MF_00569">
    <property type="entry name" value="NadA_type3"/>
    <property type="match status" value="1"/>
</dbReference>
<dbReference type="InterPro" id="IPR003473">
    <property type="entry name" value="NadA"/>
</dbReference>
<dbReference type="InterPro" id="IPR036094">
    <property type="entry name" value="NadA_sf"/>
</dbReference>
<dbReference type="InterPro" id="IPR023515">
    <property type="entry name" value="Quinolinate_synth_A_type3"/>
</dbReference>
<dbReference type="NCBIfam" id="TIGR00550">
    <property type="entry name" value="nadA"/>
    <property type="match status" value="1"/>
</dbReference>
<dbReference type="NCBIfam" id="NF006883">
    <property type="entry name" value="PRK09375.2-4"/>
    <property type="match status" value="1"/>
</dbReference>
<dbReference type="PANTHER" id="PTHR30573:SF0">
    <property type="entry name" value="QUINOLINATE SYNTHASE, CHLOROPLASTIC"/>
    <property type="match status" value="1"/>
</dbReference>
<dbReference type="PANTHER" id="PTHR30573">
    <property type="entry name" value="QUINOLINATE SYNTHETASE A"/>
    <property type="match status" value="1"/>
</dbReference>
<dbReference type="Pfam" id="PF02445">
    <property type="entry name" value="NadA"/>
    <property type="match status" value="1"/>
</dbReference>
<dbReference type="SUPFAM" id="SSF142754">
    <property type="entry name" value="NadA-like"/>
    <property type="match status" value="1"/>
</dbReference>
<feature type="chain" id="PRO_1000024993" description="Quinolinate synthase">
    <location>
        <begin position="1"/>
        <end position="374"/>
    </location>
</feature>
<feature type="binding site" evidence="1">
    <location>
        <position position="53"/>
    </location>
    <ligand>
        <name>iminosuccinate</name>
        <dbReference type="ChEBI" id="CHEBI:77875"/>
    </ligand>
</feature>
<feature type="binding site" evidence="1">
    <location>
        <position position="70"/>
    </location>
    <ligand>
        <name>iminosuccinate</name>
        <dbReference type="ChEBI" id="CHEBI:77875"/>
    </ligand>
</feature>
<feature type="binding site" evidence="1">
    <location>
        <position position="116"/>
    </location>
    <ligand>
        <name>[4Fe-4S] cluster</name>
        <dbReference type="ChEBI" id="CHEBI:49883"/>
    </ligand>
</feature>
<feature type="binding site" evidence="1">
    <location>
        <begin position="148"/>
        <end position="150"/>
    </location>
    <ligand>
        <name>iminosuccinate</name>
        <dbReference type="ChEBI" id="CHEBI:77875"/>
    </ligand>
</feature>
<feature type="binding site" evidence="1">
    <location>
        <position position="169"/>
    </location>
    <ligand>
        <name>iminosuccinate</name>
        <dbReference type="ChEBI" id="CHEBI:77875"/>
    </ligand>
</feature>
<feature type="binding site" evidence="1">
    <location>
        <position position="236"/>
    </location>
    <ligand>
        <name>[4Fe-4S] cluster</name>
        <dbReference type="ChEBI" id="CHEBI:49883"/>
    </ligand>
</feature>
<feature type="binding site" evidence="1">
    <location>
        <begin position="262"/>
        <end position="264"/>
    </location>
    <ligand>
        <name>iminosuccinate</name>
        <dbReference type="ChEBI" id="CHEBI:77875"/>
    </ligand>
</feature>
<feature type="binding site" evidence="1">
    <location>
        <position position="279"/>
    </location>
    <ligand>
        <name>iminosuccinate</name>
        <dbReference type="ChEBI" id="CHEBI:77875"/>
    </ligand>
</feature>
<feature type="binding site" evidence="1">
    <location>
        <position position="327"/>
    </location>
    <ligand>
        <name>[4Fe-4S] cluster</name>
        <dbReference type="ChEBI" id="CHEBI:49883"/>
    </ligand>
</feature>
<sequence length="374" mass="41761">METAAFETDLSLFKYDNLEQLPPSYRDLDADERTERIESALAELGDDVVILGHNYQRQEIVEHADFIGDSYQLSKEAAQSDADYVIFGGVTFMAESADIITDDDQSVILPSMEASCPMAGMAEALQVDAAWAELTAALDDEEIIPITYMNSYADLKAFCAEQGGLVCTSSNAHKAFEYAFEKGDKVLFLPDKHLGENTAHRLGMADETVEWDPWDAEGTDAADAVENDVILWEGYCQVHERFREHHIESIREDYPDANVIVHPECRREVVEAADVAGSTSTICESVAEADPGETWAIGTEIHLTHHLQRWHPDVNVVPLCGDACMDCNAMRQIDPNYLAWVLEELVEGRERNVIEVAPEEKELAQVAMDRMLEI</sequence>
<keyword id="KW-0004">4Fe-4S</keyword>
<keyword id="KW-0963">Cytoplasm</keyword>
<keyword id="KW-0408">Iron</keyword>
<keyword id="KW-0411">Iron-sulfur</keyword>
<keyword id="KW-0479">Metal-binding</keyword>
<keyword id="KW-0662">Pyridine nucleotide biosynthesis</keyword>
<keyword id="KW-1185">Reference proteome</keyword>
<keyword id="KW-0808">Transferase</keyword>
<evidence type="ECO:0000255" key="1">
    <source>
        <dbReference type="HAMAP-Rule" id="MF_00569"/>
    </source>
</evidence>
<protein>
    <recommendedName>
        <fullName evidence="1">Quinolinate synthase</fullName>
        <ecNumber evidence="1">2.5.1.72</ecNumber>
    </recommendedName>
</protein>
<accession>Q5UXB3</accession>
<gene>
    <name evidence="1" type="primary">nadA</name>
    <name type="ordered locus">rrnAC3410</name>
</gene>
<proteinExistence type="inferred from homology"/>
<organism>
    <name type="scientific">Haloarcula marismortui (strain ATCC 43049 / DSM 3752 / JCM 8966 / VKM B-1809)</name>
    <name type="common">Halobacterium marismortui</name>
    <dbReference type="NCBI Taxonomy" id="272569"/>
    <lineage>
        <taxon>Archaea</taxon>
        <taxon>Methanobacteriati</taxon>
        <taxon>Methanobacteriota</taxon>
        <taxon>Stenosarchaea group</taxon>
        <taxon>Halobacteria</taxon>
        <taxon>Halobacteriales</taxon>
        <taxon>Haloarculaceae</taxon>
        <taxon>Haloarcula</taxon>
    </lineage>
</organism>
<comment type="function">
    <text evidence="1">Catalyzes the condensation of iminoaspartate with dihydroxyacetone phosphate to form quinolinate.</text>
</comment>
<comment type="catalytic activity">
    <reaction evidence="1">
        <text>iminosuccinate + dihydroxyacetone phosphate = quinolinate + phosphate + 2 H2O + H(+)</text>
        <dbReference type="Rhea" id="RHEA:25888"/>
        <dbReference type="ChEBI" id="CHEBI:15377"/>
        <dbReference type="ChEBI" id="CHEBI:15378"/>
        <dbReference type="ChEBI" id="CHEBI:29959"/>
        <dbReference type="ChEBI" id="CHEBI:43474"/>
        <dbReference type="ChEBI" id="CHEBI:57642"/>
        <dbReference type="ChEBI" id="CHEBI:77875"/>
        <dbReference type="EC" id="2.5.1.72"/>
    </reaction>
    <physiologicalReaction direction="left-to-right" evidence="1">
        <dbReference type="Rhea" id="RHEA:25889"/>
    </physiologicalReaction>
</comment>
<comment type="cofactor">
    <cofactor evidence="1">
        <name>[4Fe-4S] cluster</name>
        <dbReference type="ChEBI" id="CHEBI:49883"/>
    </cofactor>
    <text evidence="1">Binds 1 [4Fe-4S] cluster per subunit.</text>
</comment>
<comment type="pathway">
    <text evidence="1">Cofactor biosynthesis; NAD(+) biosynthesis; quinolinate from iminoaspartate: step 1/1.</text>
</comment>
<comment type="subcellular location">
    <subcellularLocation>
        <location evidence="1">Cytoplasm</location>
    </subcellularLocation>
</comment>
<comment type="similarity">
    <text evidence="1">Belongs to the quinolinate synthase family. Type 3 subfamily.</text>
</comment>
<reference key="1">
    <citation type="journal article" date="2004" name="Genome Res.">
        <title>Genome sequence of Haloarcula marismortui: a halophilic archaeon from the Dead Sea.</title>
        <authorList>
            <person name="Baliga N.S."/>
            <person name="Bonneau R."/>
            <person name="Facciotti M.T."/>
            <person name="Pan M."/>
            <person name="Glusman G."/>
            <person name="Deutsch E.W."/>
            <person name="Shannon P."/>
            <person name="Chiu Y."/>
            <person name="Weng R.S."/>
            <person name="Gan R.R."/>
            <person name="Hung P."/>
            <person name="Date S.V."/>
            <person name="Marcotte E."/>
            <person name="Hood L."/>
            <person name="Ng W.V."/>
        </authorList>
    </citation>
    <scope>NUCLEOTIDE SEQUENCE [LARGE SCALE GENOMIC DNA]</scope>
    <source>
        <strain>ATCC 43049 / DSM 3752 / JCM 8966 / VKM B-1809</strain>
    </source>
</reference>